<gene>
    <name evidence="1" type="primary">murA</name>
    <name type="ordered locus">ETA_03280</name>
</gene>
<sequence length="420" mass="44576">MDKFRVQGPTRLSGEVTISGAKNAALPILFAALLAEEPVEIQNVPKLKDIDTTMKLLSQLGVKAERNGSVYLDASKVDIYCAPYELVKTMRASIWALGPLVARFGQGQVSLPGGCAIGARPVDLHITGLEQLGAEIKLEEGYVKASVDGRLKGAHIVMDKVSVGATVTIMSAATLATGTTVIENAAREPEIVDTANFLNTLGAKISGAGSDRITIEGVERLGGGVYRVLPDRIETGTFLVAGAISGGKVICRAAQPDTLDAVLAKLREAGAEIEVGDDWVSLDMHGKRPKAVSLRTAPHPGFPTDMQAQFSLLNLVAEGTGVITETIFENRFMHVPELARMGAHAEIESHTLICHGVEKLSSAQVMATDLRASASLVLAGCIAEGVTVVDRIYHIDRGYEHIEDKLIALGANIQRISGEE</sequence>
<evidence type="ECO:0000255" key="1">
    <source>
        <dbReference type="HAMAP-Rule" id="MF_00111"/>
    </source>
</evidence>
<organism>
    <name type="scientific">Erwinia tasmaniensis (strain DSM 17950 / CFBP 7177 / CIP 109463 / NCPPB 4357 / Et1/99)</name>
    <dbReference type="NCBI Taxonomy" id="465817"/>
    <lineage>
        <taxon>Bacteria</taxon>
        <taxon>Pseudomonadati</taxon>
        <taxon>Pseudomonadota</taxon>
        <taxon>Gammaproteobacteria</taxon>
        <taxon>Enterobacterales</taxon>
        <taxon>Erwiniaceae</taxon>
        <taxon>Erwinia</taxon>
    </lineage>
</organism>
<comment type="function">
    <text evidence="1">Cell wall formation. Adds enolpyruvyl to UDP-N-acetylglucosamine.</text>
</comment>
<comment type="catalytic activity">
    <reaction evidence="1">
        <text>phosphoenolpyruvate + UDP-N-acetyl-alpha-D-glucosamine = UDP-N-acetyl-3-O-(1-carboxyvinyl)-alpha-D-glucosamine + phosphate</text>
        <dbReference type="Rhea" id="RHEA:18681"/>
        <dbReference type="ChEBI" id="CHEBI:43474"/>
        <dbReference type="ChEBI" id="CHEBI:57705"/>
        <dbReference type="ChEBI" id="CHEBI:58702"/>
        <dbReference type="ChEBI" id="CHEBI:68483"/>
        <dbReference type="EC" id="2.5.1.7"/>
    </reaction>
</comment>
<comment type="pathway">
    <text evidence="1">Cell wall biogenesis; peptidoglycan biosynthesis.</text>
</comment>
<comment type="subcellular location">
    <subcellularLocation>
        <location evidence="1">Cytoplasm</location>
    </subcellularLocation>
</comment>
<comment type="similarity">
    <text evidence="1">Belongs to the EPSP synthase family. MurA subfamily.</text>
</comment>
<keyword id="KW-0131">Cell cycle</keyword>
<keyword id="KW-0132">Cell division</keyword>
<keyword id="KW-0133">Cell shape</keyword>
<keyword id="KW-0961">Cell wall biogenesis/degradation</keyword>
<keyword id="KW-0963">Cytoplasm</keyword>
<keyword id="KW-0573">Peptidoglycan synthesis</keyword>
<keyword id="KW-0670">Pyruvate</keyword>
<keyword id="KW-1185">Reference proteome</keyword>
<keyword id="KW-0808">Transferase</keyword>
<reference key="1">
    <citation type="journal article" date="2008" name="Environ. Microbiol.">
        <title>The genome of Erwinia tasmaniensis strain Et1/99, a non-pathogenic bacterium in the genus Erwinia.</title>
        <authorList>
            <person name="Kube M."/>
            <person name="Migdoll A.M."/>
            <person name="Mueller I."/>
            <person name="Kuhl H."/>
            <person name="Beck A."/>
            <person name="Reinhardt R."/>
            <person name="Geider K."/>
        </authorList>
    </citation>
    <scope>NUCLEOTIDE SEQUENCE [LARGE SCALE GENOMIC DNA]</scope>
    <source>
        <strain>DSM 17950 / CFBP 7177 / CIP 109463 / NCPPB 4357 / Et1/99</strain>
    </source>
</reference>
<dbReference type="EC" id="2.5.1.7" evidence="1"/>
<dbReference type="EMBL" id="CU468135">
    <property type="protein sequence ID" value="CAO95374.1"/>
    <property type="molecule type" value="Genomic_DNA"/>
</dbReference>
<dbReference type="RefSeq" id="WP_012440090.1">
    <property type="nucleotide sequence ID" value="NC_010694.1"/>
</dbReference>
<dbReference type="SMR" id="B2VGU0"/>
<dbReference type="STRING" id="465817.ETA_03280"/>
<dbReference type="KEGG" id="eta:ETA_03280"/>
<dbReference type="eggNOG" id="COG0766">
    <property type="taxonomic scope" value="Bacteria"/>
</dbReference>
<dbReference type="HOGENOM" id="CLU_027387_0_0_6"/>
<dbReference type="OrthoDB" id="9803760at2"/>
<dbReference type="UniPathway" id="UPA00219"/>
<dbReference type="Proteomes" id="UP000001726">
    <property type="component" value="Chromosome"/>
</dbReference>
<dbReference type="GO" id="GO:0005737">
    <property type="term" value="C:cytoplasm"/>
    <property type="evidence" value="ECO:0007669"/>
    <property type="project" value="UniProtKB-SubCell"/>
</dbReference>
<dbReference type="GO" id="GO:0008760">
    <property type="term" value="F:UDP-N-acetylglucosamine 1-carboxyvinyltransferase activity"/>
    <property type="evidence" value="ECO:0007669"/>
    <property type="project" value="UniProtKB-UniRule"/>
</dbReference>
<dbReference type="GO" id="GO:0051301">
    <property type="term" value="P:cell division"/>
    <property type="evidence" value="ECO:0007669"/>
    <property type="project" value="UniProtKB-KW"/>
</dbReference>
<dbReference type="GO" id="GO:0071555">
    <property type="term" value="P:cell wall organization"/>
    <property type="evidence" value="ECO:0007669"/>
    <property type="project" value="UniProtKB-KW"/>
</dbReference>
<dbReference type="GO" id="GO:0009252">
    <property type="term" value="P:peptidoglycan biosynthetic process"/>
    <property type="evidence" value="ECO:0007669"/>
    <property type="project" value="UniProtKB-UniRule"/>
</dbReference>
<dbReference type="GO" id="GO:0008360">
    <property type="term" value="P:regulation of cell shape"/>
    <property type="evidence" value="ECO:0007669"/>
    <property type="project" value="UniProtKB-KW"/>
</dbReference>
<dbReference type="GO" id="GO:0019277">
    <property type="term" value="P:UDP-N-acetylgalactosamine biosynthetic process"/>
    <property type="evidence" value="ECO:0007669"/>
    <property type="project" value="InterPro"/>
</dbReference>
<dbReference type="CDD" id="cd01555">
    <property type="entry name" value="UdpNAET"/>
    <property type="match status" value="1"/>
</dbReference>
<dbReference type="FunFam" id="3.65.10.10:FF:000002">
    <property type="entry name" value="UDP-N-acetylglucosamine 1-carboxyvinyltransferase"/>
    <property type="match status" value="1"/>
</dbReference>
<dbReference type="Gene3D" id="3.65.10.10">
    <property type="entry name" value="Enolpyruvate transferase domain"/>
    <property type="match status" value="2"/>
</dbReference>
<dbReference type="HAMAP" id="MF_00111">
    <property type="entry name" value="MurA"/>
    <property type="match status" value="1"/>
</dbReference>
<dbReference type="InterPro" id="IPR001986">
    <property type="entry name" value="Enolpyruvate_Tfrase_dom"/>
</dbReference>
<dbReference type="InterPro" id="IPR036968">
    <property type="entry name" value="Enolpyruvate_Tfrase_sf"/>
</dbReference>
<dbReference type="InterPro" id="IPR050068">
    <property type="entry name" value="MurA_subfamily"/>
</dbReference>
<dbReference type="InterPro" id="IPR013792">
    <property type="entry name" value="RNA3'P_cycl/enolpyr_Trfase_a/b"/>
</dbReference>
<dbReference type="InterPro" id="IPR005750">
    <property type="entry name" value="UDP_GlcNAc_COvinyl_MurA"/>
</dbReference>
<dbReference type="NCBIfam" id="TIGR01072">
    <property type="entry name" value="murA"/>
    <property type="match status" value="1"/>
</dbReference>
<dbReference type="NCBIfam" id="NF006873">
    <property type="entry name" value="PRK09369.1"/>
    <property type="match status" value="1"/>
</dbReference>
<dbReference type="PANTHER" id="PTHR43783">
    <property type="entry name" value="UDP-N-ACETYLGLUCOSAMINE 1-CARBOXYVINYLTRANSFERASE"/>
    <property type="match status" value="1"/>
</dbReference>
<dbReference type="PANTHER" id="PTHR43783:SF1">
    <property type="entry name" value="UDP-N-ACETYLGLUCOSAMINE 1-CARBOXYVINYLTRANSFERASE"/>
    <property type="match status" value="1"/>
</dbReference>
<dbReference type="Pfam" id="PF00275">
    <property type="entry name" value="EPSP_synthase"/>
    <property type="match status" value="1"/>
</dbReference>
<dbReference type="SUPFAM" id="SSF55205">
    <property type="entry name" value="EPT/RTPC-like"/>
    <property type="match status" value="1"/>
</dbReference>
<accession>B2VGU0</accession>
<feature type="chain" id="PRO_1000094691" description="UDP-N-acetylglucosamine 1-carboxyvinyltransferase">
    <location>
        <begin position="1"/>
        <end position="420"/>
    </location>
</feature>
<feature type="active site" description="Proton donor" evidence="1">
    <location>
        <position position="115"/>
    </location>
</feature>
<feature type="binding site" evidence="1">
    <location>
        <begin position="22"/>
        <end position="23"/>
    </location>
    <ligand>
        <name>phosphoenolpyruvate</name>
        <dbReference type="ChEBI" id="CHEBI:58702"/>
    </ligand>
</feature>
<feature type="binding site" evidence="1">
    <location>
        <position position="91"/>
    </location>
    <ligand>
        <name>UDP-N-acetyl-alpha-D-glucosamine</name>
        <dbReference type="ChEBI" id="CHEBI:57705"/>
    </ligand>
</feature>
<feature type="binding site" evidence="1">
    <location>
        <begin position="120"/>
        <end position="124"/>
    </location>
    <ligand>
        <name>UDP-N-acetyl-alpha-D-glucosamine</name>
        <dbReference type="ChEBI" id="CHEBI:57705"/>
    </ligand>
</feature>
<feature type="binding site" evidence="1">
    <location>
        <begin position="160"/>
        <end position="163"/>
    </location>
    <ligand>
        <name>UDP-N-acetyl-alpha-D-glucosamine</name>
        <dbReference type="ChEBI" id="CHEBI:57705"/>
    </ligand>
</feature>
<feature type="binding site" evidence="1">
    <location>
        <position position="305"/>
    </location>
    <ligand>
        <name>UDP-N-acetyl-alpha-D-glucosamine</name>
        <dbReference type="ChEBI" id="CHEBI:57705"/>
    </ligand>
</feature>
<feature type="binding site" evidence="1">
    <location>
        <position position="327"/>
    </location>
    <ligand>
        <name>UDP-N-acetyl-alpha-D-glucosamine</name>
        <dbReference type="ChEBI" id="CHEBI:57705"/>
    </ligand>
</feature>
<feature type="modified residue" description="2-(S-cysteinyl)pyruvic acid O-phosphothioketal" evidence="1">
    <location>
        <position position="115"/>
    </location>
</feature>
<proteinExistence type="inferred from homology"/>
<protein>
    <recommendedName>
        <fullName evidence="1">UDP-N-acetylglucosamine 1-carboxyvinyltransferase</fullName>
        <ecNumber evidence="1">2.5.1.7</ecNumber>
    </recommendedName>
    <alternativeName>
        <fullName evidence="1">Enoylpyruvate transferase</fullName>
    </alternativeName>
    <alternativeName>
        <fullName evidence="1">UDP-N-acetylglucosamine enolpyruvyl transferase</fullName>
        <shortName evidence="1">EPT</shortName>
    </alternativeName>
</protein>
<name>MURA_ERWT9</name>